<feature type="chain" id="PRO_0000139004" description="Multifunctional CCA protein">
    <location>
        <begin position="1"/>
        <end position="406"/>
    </location>
</feature>
<feature type="domain" description="HD" evidence="1">
    <location>
        <begin position="228"/>
        <end position="329"/>
    </location>
</feature>
<feature type="binding site" evidence="1">
    <location>
        <position position="8"/>
    </location>
    <ligand>
        <name>ATP</name>
        <dbReference type="ChEBI" id="CHEBI:30616"/>
    </ligand>
</feature>
<feature type="binding site" evidence="1">
    <location>
        <position position="8"/>
    </location>
    <ligand>
        <name>CTP</name>
        <dbReference type="ChEBI" id="CHEBI:37563"/>
    </ligand>
</feature>
<feature type="binding site" evidence="1">
    <location>
        <position position="11"/>
    </location>
    <ligand>
        <name>ATP</name>
        <dbReference type="ChEBI" id="CHEBI:30616"/>
    </ligand>
</feature>
<feature type="binding site" evidence="1">
    <location>
        <position position="11"/>
    </location>
    <ligand>
        <name>CTP</name>
        <dbReference type="ChEBI" id="CHEBI:37563"/>
    </ligand>
</feature>
<feature type="binding site" evidence="1">
    <location>
        <position position="21"/>
    </location>
    <ligand>
        <name>Mg(2+)</name>
        <dbReference type="ChEBI" id="CHEBI:18420"/>
    </ligand>
</feature>
<feature type="binding site" evidence="1">
    <location>
        <position position="23"/>
    </location>
    <ligand>
        <name>Mg(2+)</name>
        <dbReference type="ChEBI" id="CHEBI:18420"/>
    </ligand>
</feature>
<feature type="binding site" evidence="1">
    <location>
        <position position="91"/>
    </location>
    <ligand>
        <name>ATP</name>
        <dbReference type="ChEBI" id="CHEBI:30616"/>
    </ligand>
</feature>
<feature type="binding site" evidence="1">
    <location>
        <position position="91"/>
    </location>
    <ligand>
        <name>CTP</name>
        <dbReference type="ChEBI" id="CHEBI:37563"/>
    </ligand>
</feature>
<feature type="binding site" evidence="1">
    <location>
        <position position="137"/>
    </location>
    <ligand>
        <name>ATP</name>
        <dbReference type="ChEBI" id="CHEBI:30616"/>
    </ligand>
</feature>
<feature type="binding site" evidence="1">
    <location>
        <position position="137"/>
    </location>
    <ligand>
        <name>CTP</name>
        <dbReference type="ChEBI" id="CHEBI:37563"/>
    </ligand>
</feature>
<feature type="binding site" evidence="1">
    <location>
        <position position="140"/>
    </location>
    <ligand>
        <name>ATP</name>
        <dbReference type="ChEBI" id="CHEBI:30616"/>
    </ligand>
</feature>
<feature type="binding site" evidence="1">
    <location>
        <position position="140"/>
    </location>
    <ligand>
        <name>CTP</name>
        <dbReference type="ChEBI" id="CHEBI:37563"/>
    </ligand>
</feature>
<accession>Q87SK9</accession>
<gene>
    <name evidence="1" type="primary">cca</name>
    <name type="ordered locus">VP0414</name>
</gene>
<dbReference type="EC" id="2.7.7.72" evidence="1"/>
<dbReference type="EC" id="3.1.3.-" evidence="1"/>
<dbReference type="EC" id="3.1.4.-" evidence="1"/>
<dbReference type="EMBL" id="BA000031">
    <property type="protein sequence ID" value="BAC58677.1"/>
    <property type="molecule type" value="Genomic_DNA"/>
</dbReference>
<dbReference type="RefSeq" id="NP_796793.1">
    <property type="nucleotide sequence ID" value="NC_004603.1"/>
</dbReference>
<dbReference type="RefSeq" id="WP_005479176.1">
    <property type="nucleotide sequence ID" value="NC_004603.1"/>
</dbReference>
<dbReference type="SMR" id="Q87SK9"/>
<dbReference type="GeneID" id="1187882"/>
<dbReference type="KEGG" id="vpa:VP0414"/>
<dbReference type="PATRIC" id="fig|223926.6.peg.393"/>
<dbReference type="eggNOG" id="COG0617">
    <property type="taxonomic scope" value="Bacteria"/>
</dbReference>
<dbReference type="HOGENOM" id="CLU_015961_1_1_6"/>
<dbReference type="Proteomes" id="UP000002493">
    <property type="component" value="Chromosome 1"/>
</dbReference>
<dbReference type="GO" id="GO:0005524">
    <property type="term" value="F:ATP binding"/>
    <property type="evidence" value="ECO:0007669"/>
    <property type="project" value="UniProtKB-UniRule"/>
</dbReference>
<dbReference type="GO" id="GO:0004810">
    <property type="term" value="F:CCA tRNA nucleotidyltransferase activity"/>
    <property type="evidence" value="ECO:0007669"/>
    <property type="project" value="UniProtKB-UniRule"/>
</dbReference>
<dbReference type="GO" id="GO:0004112">
    <property type="term" value="F:cyclic-nucleotide phosphodiesterase activity"/>
    <property type="evidence" value="ECO:0007669"/>
    <property type="project" value="UniProtKB-UniRule"/>
</dbReference>
<dbReference type="GO" id="GO:0000287">
    <property type="term" value="F:magnesium ion binding"/>
    <property type="evidence" value="ECO:0007669"/>
    <property type="project" value="UniProtKB-UniRule"/>
</dbReference>
<dbReference type="GO" id="GO:0016791">
    <property type="term" value="F:phosphatase activity"/>
    <property type="evidence" value="ECO:0007669"/>
    <property type="project" value="UniProtKB-UniRule"/>
</dbReference>
<dbReference type="GO" id="GO:0000049">
    <property type="term" value="F:tRNA binding"/>
    <property type="evidence" value="ECO:0007669"/>
    <property type="project" value="UniProtKB-UniRule"/>
</dbReference>
<dbReference type="GO" id="GO:0042245">
    <property type="term" value="P:RNA repair"/>
    <property type="evidence" value="ECO:0007669"/>
    <property type="project" value="UniProtKB-KW"/>
</dbReference>
<dbReference type="GO" id="GO:0001680">
    <property type="term" value="P:tRNA 3'-terminal CCA addition"/>
    <property type="evidence" value="ECO:0007669"/>
    <property type="project" value="UniProtKB-UniRule"/>
</dbReference>
<dbReference type="CDD" id="cd00077">
    <property type="entry name" value="HDc"/>
    <property type="match status" value="1"/>
</dbReference>
<dbReference type="CDD" id="cd05398">
    <property type="entry name" value="NT_ClassII-CCAase"/>
    <property type="match status" value="1"/>
</dbReference>
<dbReference type="FunFam" id="1.10.3090.10:FF:000001">
    <property type="entry name" value="Multifunctional CCA protein"/>
    <property type="match status" value="1"/>
</dbReference>
<dbReference type="Gene3D" id="3.30.460.10">
    <property type="entry name" value="Beta Polymerase, domain 2"/>
    <property type="match status" value="1"/>
</dbReference>
<dbReference type="Gene3D" id="1.10.3090.10">
    <property type="entry name" value="cca-adding enzyme, domain 2"/>
    <property type="match status" value="1"/>
</dbReference>
<dbReference type="HAMAP" id="MF_01261">
    <property type="entry name" value="CCA_bact_type1"/>
    <property type="match status" value="1"/>
</dbReference>
<dbReference type="HAMAP" id="MF_01262">
    <property type="entry name" value="CCA_bact_type2"/>
    <property type="match status" value="1"/>
</dbReference>
<dbReference type="InterPro" id="IPR012006">
    <property type="entry name" value="CCA_bact"/>
</dbReference>
<dbReference type="InterPro" id="IPR003607">
    <property type="entry name" value="HD/PDEase_dom"/>
</dbReference>
<dbReference type="InterPro" id="IPR006674">
    <property type="entry name" value="HD_domain"/>
</dbReference>
<dbReference type="InterPro" id="IPR043519">
    <property type="entry name" value="NT_sf"/>
</dbReference>
<dbReference type="InterPro" id="IPR002646">
    <property type="entry name" value="PolA_pol_head_dom"/>
</dbReference>
<dbReference type="InterPro" id="IPR032828">
    <property type="entry name" value="PolyA_RNA-bd"/>
</dbReference>
<dbReference type="InterPro" id="IPR050124">
    <property type="entry name" value="tRNA_CCA-adding_enzyme"/>
</dbReference>
<dbReference type="NCBIfam" id="NF008137">
    <property type="entry name" value="PRK10885.1"/>
    <property type="match status" value="1"/>
</dbReference>
<dbReference type="PANTHER" id="PTHR47545">
    <property type="entry name" value="MULTIFUNCTIONAL CCA PROTEIN"/>
    <property type="match status" value="1"/>
</dbReference>
<dbReference type="PANTHER" id="PTHR47545:SF1">
    <property type="entry name" value="MULTIFUNCTIONAL CCA PROTEIN"/>
    <property type="match status" value="1"/>
</dbReference>
<dbReference type="Pfam" id="PF01966">
    <property type="entry name" value="HD"/>
    <property type="match status" value="1"/>
</dbReference>
<dbReference type="Pfam" id="PF01743">
    <property type="entry name" value="PolyA_pol"/>
    <property type="match status" value="1"/>
</dbReference>
<dbReference type="Pfam" id="PF12627">
    <property type="entry name" value="PolyA_pol_RNAbd"/>
    <property type="match status" value="1"/>
</dbReference>
<dbReference type="PIRSF" id="PIRSF000813">
    <property type="entry name" value="CCA_bact"/>
    <property type="match status" value="1"/>
</dbReference>
<dbReference type="SUPFAM" id="SSF81301">
    <property type="entry name" value="Nucleotidyltransferase"/>
    <property type="match status" value="1"/>
</dbReference>
<dbReference type="SUPFAM" id="SSF81891">
    <property type="entry name" value="Poly A polymerase C-terminal region-like"/>
    <property type="match status" value="1"/>
</dbReference>
<dbReference type="PROSITE" id="PS51831">
    <property type="entry name" value="HD"/>
    <property type="match status" value="1"/>
</dbReference>
<name>CCA_VIBPA</name>
<protein>
    <recommendedName>
        <fullName evidence="1">Multifunctional CCA protein</fullName>
    </recommendedName>
    <domain>
        <recommendedName>
            <fullName evidence="1">CCA-adding enzyme</fullName>
            <ecNumber evidence="1">2.7.7.72</ecNumber>
        </recommendedName>
        <alternativeName>
            <fullName evidence="1">CCA tRNA nucleotidyltransferase</fullName>
        </alternativeName>
        <alternativeName>
            <fullName evidence="1">tRNA CCA-pyrophosphorylase</fullName>
        </alternativeName>
        <alternativeName>
            <fullName evidence="1">tRNA adenylyl-/cytidylyl-transferase</fullName>
        </alternativeName>
        <alternativeName>
            <fullName evidence="1">tRNA nucleotidyltransferase</fullName>
        </alternativeName>
        <alternativeName>
            <fullName evidence="1">tRNA-NT</fullName>
        </alternativeName>
    </domain>
    <domain>
        <recommendedName>
            <fullName evidence="1">2'-nucleotidase</fullName>
            <ecNumber evidence="1">3.1.3.-</ecNumber>
        </recommendedName>
    </domain>
    <domain>
        <recommendedName>
            <fullName evidence="1">2',3'-cyclic phosphodiesterase</fullName>
            <ecNumber evidence="1">3.1.4.-</ecNumber>
        </recommendedName>
    </domain>
    <domain>
        <recommendedName>
            <fullName evidence="1">Phosphatase</fullName>
            <ecNumber evidence="1">3.1.3.-</ecNumber>
        </recommendedName>
    </domain>
</protein>
<comment type="function">
    <text evidence="1">Catalyzes the addition and repair of the essential 3'-terminal CCA sequence in tRNAs without using a nucleic acid template. Adds these three nucleotides in the order of C, C, and A to the tRNA nucleotide-73, using CTP and ATP as substrates and producing inorganic pyrophosphate. tRNA 3'-terminal CCA addition is required both for tRNA processing and repair. Also involved in tRNA surveillance by mediating tandem CCA addition to generate a CCACCA at the 3' terminus of unstable tRNAs. While stable tRNAs receive only 3'-terminal CCA, unstable tRNAs are marked with CCACCA and rapidly degraded.</text>
</comment>
<comment type="catalytic activity">
    <reaction evidence="1">
        <text>a tRNA precursor + 2 CTP + ATP = a tRNA with a 3' CCA end + 3 diphosphate</text>
        <dbReference type="Rhea" id="RHEA:14433"/>
        <dbReference type="Rhea" id="RHEA-COMP:10465"/>
        <dbReference type="Rhea" id="RHEA-COMP:10468"/>
        <dbReference type="ChEBI" id="CHEBI:30616"/>
        <dbReference type="ChEBI" id="CHEBI:33019"/>
        <dbReference type="ChEBI" id="CHEBI:37563"/>
        <dbReference type="ChEBI" id="CHEBI:74896"/>
        <dbReference type="ChEBI" id="CHEBI:83071"/>
        <dbReference type="EC" id="2.7.7.72"/>
    </reaction>
</comment>
<comment type="catalytic activity">
    <reaction evidence="1">
        <text>a tRNA with a 3' CCA end + 2 CTP + ATP = a tRNA with a 3' CCACCA end + 3 diphosphate</text>
        <dbReference type="Rhea" id="RHEA:76235"/>
        <dbReference type="Rhea" id="RHEA-COMP:10468"/>
        <dbReference type="Rhea" id="RHEA-COMP:18655"/>
        <dbReference type="ChEBI" id="CHEBI:30616"/>
        <dbReference type="ChEBI" id="CHEBI:33019"/>
        <dbReference type="ChEBI" id="CHEBI:37563"/>
        <dbReference type="ChEBI" id="CHEBI:83071"/>
        <dbReference type="ChEBI" id="CHEBI:195187"/>
    </reaction>
    <physiologicalReaction direction="left-to-right" evidence="1">
        <dbReference type="Rhea" id="RHEA:76236"/>
    </physiologicalReaction>
</comment>
<comment type="cofactor">
    <cofactor evidence="1">
        <name>Mg(2+)</name>
        <dbReference type="ChEBI" id="CHEBI:18420"/>
    </cofactor>
    <text evidence="1">Magnesium is required for nucleotidyltransferase activity.</text>
</comment>
<comment type="cofactor">
    <cofactor evidence="1">
        <name>Ni(2+)</name>
        <dbReference type="ChEBI" id="CHEBI:49786"/>
    </cofactor>
    <text evidence="1">Nickel for phosphatase activity.</text>
</comment>
<comment type="subunit">
    <text evidence="1">Monomer. Can also form homodimers and oligomers.</text>
</comment>
<comment type="domain">
    <text evidence="1">Comprises two domains: an N-terminal domain containing the nucleotidyltransferase activity and a C-terminal HD domain associated with both phosphodiesterase and phosphatase activities.</text>
</comment>
<comment type="miscellaneous">
    <text evidence="1">A single active site specifically recognizes both ATP and CTP and is responsible for their addition.</text>
</comment>
<comment type="similarity">
    <text evidence="1">Belongs to the tRNA nucleotidyltransferase/poly(A) polymerase family. Bacterial CCA-adding enzyme type 1 subfamily.</text>
</comment>
<sequence>MQVYLVGGAVRDQLLGIDSYDNDWVVVGATPEMMLAQGYTAVGKDFPVFLHPKNKEEHALARTERKSGSGYTGFDCFFDPSVTLEEDLIRRDLTINAMAMDDSGQLYDPYGGQADLNNRILRHVSDAFVEDPLRVLRVARFSAKLASLGFTVAKETMQLMRDIADSGELNTLTPERVWQEWHKSLSTPRPDVFLSVLRDCGALAVVLPEIEALFGVPQPEKWHPEIDTGIHTLMVAEQAAKLSTSLPVRFAAQVHDLGKGVTPESEWPSHKMHCHTGLKLIKKLCERVRVPNEFKELALMVCEQHSNIHRAAELKPQTIIKILNKFDVWRKSERLKDILICCQADHAGRKGLEDLPYPQAGIFMLAYQAAASVDVQAIIQDGFKGPAIRDEQEKRRIEAVKVALNK</sequence>
<keyword id="KW-0067">ATP-binding</keyword>
<keyword id="KW-0378">Hydrolase</keyword>
<keyword id="KW-0460">Magnesium</keyword>
<keyword id="KW-0479">Metal-binding</keyword>
<keyword id="KW-0511">Multifunctional enzyme</keyword>
<keyword id="KW-0533">Nickel</keyword>
<keyword id="KW-0547">Nucleotide-binding</keyword>
<keyword id="KW-0548">Nucleotidyltransferase</keyword>
<keyword id="KW-0692">RNA repair</keyword>
<keyword id="KW-0694">RNA-binding</keyword>
<keyword id="KW-0808">Transferase</keyword>
<keyword id="KW-0819">tRNA processing</keyword>
<reference key="1">
    <citation type="journal article" date="2003" name="Lancet">
        <title>Genome sequence of Vibrio parahaemolyticus: a pathogenic mechanism distinct from that of V. cholerae.</title>
        <authorList>
            <person name="Makino K."/>
            <person name="Oshima K."/>
            <person name="Kurokawa K."/>
            <person name="Yokoyama K."/>
            <person name="Uda T."/>
            <person name="Tagomori K."/>
            <person name="Iijima Y."/>
            <person name="Najima M."/>
            <person name="Nakano M."/>
            <person name="Yamashita A."/>
            <person name="Kubota Y."/>
            <person name="Kimura S."/>
            <person name="Yasunaga T."/>
            <person name="Honda T."/>
            <person name="Shinagawa H."/>
            <person name="Hattori M."/>
            <person name="Iida T."/>
        </authorList>
    </citation>
    <scope>NUCLEOTIDE SEQUENCE [LARGE SCALE GENOMIC DNA]</scope>
    <source>
        <strain>RIMD 2210633</strain>
    </source>
</reference>
<evidence type="ECO:0000255" key="1">
    <source>
        <dbReference type="HAMAP-Rule" id="MF_01261"/>
    </source>
</evidence>
<organism>
    <name type="scientific">Vibrio parahaemolyticus serotype O3:K6 (strain RIMD 2210633)</name>
    <dbReference type="NCBI Taxonomy" id="223926"/>
    <lineage>
        <taxon>Bacteria</taxon>
        <taxon>Pseudomonadati</taxon>
        <taxon>Pseudomonadota</taxon>
        <taxon>Gammaproteobacteria</taxon>
        <taxon>Vibrionales</taxon>
        <taxon>Vibrionaceae</taxon>
        <taxon>Vibrio</taxon>
    </lineage>
</organism>
<proteinExistence type="inferred from homology"/>